<name>NGRN_MOUSE</name>
<accession>Q99KS2</accession>
<accession>Q8C401</accession>
<accession>Q99PU9</accession>
<dbReference type="EMBL" id="AB047544">
    <property type="protein sequence ID" value="BAB21528.1"/>
    <property type="status" value="ALT_SEQ"/>
    <property type="molecule type" value="mRNA"/>
</dbReference>
<dbReference type="EMBL" id="AK083330">
    <property type="protein sequence ID" value="BAC38868.1"/>
    <property type="status" value="ALT_SEQ"/>
    <property type="molecule type" value="mRNA"/>
</dbReference>
<dbReference type="EMBL" id="AK144756">
    <property type="protein sequence ID" value="BAE26050.1"/>
    <property type="status" value="ALT_INIT"/>
    <property type="molecule type" value="mRNA"/>
</dbReference>
<dbReference type="EMBL" id="AK146059">
    <property type="protein sequence ID" value="BAE26868.1"/>
    <property type="status" value="ALT_SEQ"/>
    <property type="molecule type" value="mRNA"/>
</dbReference>
<dbReference type="EMBL" id="AC109232">
    <property type="status" value="NOT_ANNOTATED_CDS"/>
    <property type="molecule type" value="Genomic_DNA"/>
</dbReference>
<dbReference type="EMBL" id="BC004034">
    <property type="protein sequence ID" value="AAH04034.1"/>
    <property type="status" value="ALT_INIT"/>
    <property type="molecule type" value="mRNA"/>
</dbReference>
<dbReference type="CCDS" id="CCDS21393.2">
    <molecule id="Q99KS2-1"/>
</dbReference>
<dbReference type="PIR" id="JC7564">
    <property type="entry name" value="JC7564"/>
</dbReference>
<dbReference type="RefSeq" id="NP_113552.3">
    <molecule id="Q99KS2-1"/>
    <property type="nucleotide sequence ID" value="NM_031375.4"/>
</dbReference>
<dbReference type="SMR" id="Q99KS2"/>
<dbReference type="FunCoup" id="Q99KS2">
    <property type="interactions" value="1433"/>
</dbReference>
<dbReference type="STRING" id="10090.ENSMUSP00000113444"/>
<dbReference type="GlyCosmos" id="Q99KS2">
    <property type="glycosylation" value="1 site, No reported glycans"/>
</dbReference>
<dbReference type="GlyGen" id="Q99KS2">
    <property type="glycosylation" value="1 site"/>
</dbReference>
<dbReference type="iPTMnet" id="Q99KS2"/>
<dbReference type="PhosphoSitePlus" id="Q99KS2"/>
<dbReference type="PaxDb" id="10090-ENSMUSP00000113444"/>
<dbReference type="PeptideAtlas" id="Q99KS2"/>
<dbReference type="ProteomicsDB" id="252889">
    <molecule id="Q99KS2-1"/>
</dbReference>
<dbReference type="Pumba" id="Q99KS2"/>
<dbReference type="Antibodypedia" id="28784">
    <property type="antibodies" value="142 antibodies from 24 providers"/>
</dbReference>
<dbReference type="DNASU" id="83485"/>
<dbReference type="Ensembl" id="ENSMUST00000117989.2">
    <molecule id="Q99KS2-1"/>
    <property type="protein sequence ID" value="ENSMUSP00000113444.2"/>
    <property type="gene ID" value="ENSMUSG00000047084.9"/>
</dbReference>
<dbReference type="GeneID" id="83485"/>
<dbReference type="KEGG" id="mmu:83485"/>
<dbReference type="UCSC" id="uc009hzz.2">
    <molecule id="Q99KS2-1"/>
    <property type="organism name" value="mouse"/>
</dbReference>
<dbReference type="AGR" id="MGI:1933212"/>
<dbReference type="CTD" id="51335"/>
<dbReference type="MGI" id="MGI:1933212">
    <property type="gene designation" value="Ngrn"/>
</dbReference>
<dbReference type="VEuPathDB" id="HostDB:ENSMUSG00000047084"/>
<dbReference type="eggNOG" id="ENOG502S5A6">
    <property type="taxonomic scope" value="Eukaryota"/>
</dbReference>
<dbReference type="GeneTree" id="ENSGT00390000014472"/>
<dbReference type="HOGENOM" id="CLU_076903_1_0_1"/>
<dbReference type="InParanoid" id="Q99KS2"/>
<dbReference type="OMA" id="IEHIYFL"/>
<dbReference type="OrthoDB" id="6415470at2759"/>
<dbReference type="PhylomeDB" id="Q99KS2"/>
<dbReference type="TreeFam" id="TF324463"/>
<dbReference type="BioGRID-ORCS" id="83485">
    <property type="hits" value="7 hits in 76 CRISPR screens"/>
</dbReference>
<dbReference type="ChiTaRS" id="Ngrn">
    <property type="organism name" value="mouse"/>
</dbReference>
<dbReference type="PRO" id="PR:Q99KS2"/>
<dbReference type="Proteomes" id="UP000000589">
    <property type="component" value="Chromosome 7"/>
</dbReference>
<dbReference type="RNAct" id="Q99KS2">
    <property type="molecule type" value="protein"/>
</dbReference>
<dbReference type="Bgee" id="ENSMUSG00000047084">
    <property type="expression patterns" value="Expressed in olfactory epithelium and 258 other cell types or tissues"/>
</dbReference>
<dbReference type="GO" id="GO:0005576">
    <property type="term" value="C:extracellular region"/>
    <property type="evidence" value="ECO:0007669"/>
    <property type="project" value="UniProtKB-SubCell"/>
</dbReference>
<dbReference type="GO" id="GO:0045171">
    <property type="term" value="C:intercellular bridge"/>
    <property type="evidence" value="ECO:0007669"/>
    <property type="project" value="Ensembl"/>
</dbReference>
<dbReference type="GO" id="GO:0005759">
    <property type="term" value="C:mitochondrial matrix"/>
    <property type="evidence" value="ECO:0007669"/>
    <property type="project" value="Ensembl"/>
</dbReference>
<dbReference type="GO" id="GO:0031966">
    <property type="term" value="C:mitochondrial membrane"/>
    <property type="evidence" value="ECO:0000250"/>
    <property type="project" value="UniProtKB"/>
</dbReference>
<dbReference type="GO" id="GO:0072686">
    <property type="term" value="C:mitotic spindle"/>
    <property type="evidence" value="ECO:0007669"/>
    <property type="project" value="Ensembl"/>
</dbReference>
<dbReference type="GO" id="GO:0016604">
    <property type="term" value="C:nuclear body"/>
    <property type="evidence" value="ECO:0007669"/>
    <property type="project" value="Ensembl"/>
</dbReference>
<dbReference type="GO" id="GO:0005634">
    <property type="term" value="C:nucleus"/>
    <property type="evidence" value="ECO:0000314"/>
    <property type="project" value="MGI"/>
</dbReference>
<dbReference type="GO" id="GO:0019843">
    <property type="term" value="F:rRNA binding"/>
    <property type="evidence" value="ECO:0000250"/>
    <property type="project" value="UniProtKB"/>
</dbReference>
<dbReference type="GO" id="GO:0030154">
    <property type="term" value="P:cell differentiation"/>
    <property type="evidence" value="ECO:0007669"/>
    <property type="project" value="UniProtKB-KW"/>
</dbReference>
<dbReference type="GO" id="GO:0061668">
    <property type="term" value="P:mitochondrial ribosome assembly"/>
    <property type="evidence" value="ECO:0000250"/>
    <property type="project" value="UniProtKB"/>
</dbReference>
<dbReference type="GO" id="GO:0070131">
    <property type="term" value="P:positive regulation of mitochondrial translation"/>
    <property type="evidence" value="ECO:0000250"/>
    <property type="project" value="UniProtKB"/>
</dbReference>
<dbReference type="InterPro" id="IPR010487">
    <property type="entry name" value="NGRN/Rrg9"/>
</dbReference>
<dbReference type="PANTHER" id="PTHR13475">
    <property type="entry name" value="NEUGRIN"/>
    <property type="match status" value="1"/>
</dbReference>
<dbReference type="PANTHER" id="PTHR13475:SF4">
    <property type="entry name" value="NEUGRIN"/>
    <property type="match status" value="1"/>
</dbReference>
<dbReference type="Pfam" id="PF06413">
    <property type="entry name" value="Neugrin"/>
    <property type="match status" value="1"/>
</dbReference>
<proteinExistence type="evidence at transcript level"/>
<reference key="1">
    <citation type="journal article" date="2000" name="Biochem. Biophys. Res. Commun.">
        <title>Two novel genes, human neugrin and mouse m-neugrin, are upregulated with neuronal differentiation in neuroblastoma cells.</title>
        <authorList>
            <person name="Ishigaki S."/>
            <person name="Niwa J."/>
            <person name="Yoshihara T."/>
            <person name="Mitsuma N."/>
            <person name="Doyu M."/>
            <person name="Sobue G."/>
        </authorList>
    </citation>
    <scope>NUCLEOTIDE SEQUENCE [MRNA] (ISOFORM 1)</scope>
    <scope>SUBCELLULAR LOCATION</scope>
    <scope>TISSUE SPECIFICITY</scope>
    <scope>DEVELOPMENTAL STAGE</scope>
    <scope>INDUCTION</scope>
</reference>
<reference key="2">
    <citation type="journal article" date="2005" name="Science">
        <title>The transcriptional landscape of the mammalian genome.</title>
        <authorList>
            <person name="Carninci P."/>
            <person name="Kasukawa T."/>
            <person name="Katayama S."/>
            <person name="Gough J."/>
            <person name="Frith M.C."/>
            <person name="Maeda N."/>
            <person name="Oyama R."/>
            <person name="Ravasi T."/>
            <person name="Lenhard B."/>
            <person name="Wells C."/>
            <person name="Kodzius R."/>
            <person name="Shimokawa K."/>
            <person name="Bajic V.B."/>
            <person name="Brenner S.E."/>
            <person name="Batalov S."/>
            <person name="Forrest A.R."/>
            <person name="Zavolan M."/>
            <person name="Davis M.J."/>
            <person name="Wilming L.G."/>
            <person name="Aidinis V."/>
            <person name="Allen J.E."/>
            <person name="Ambesi-Impiombato A."/>
            <person name="Apweiler R."/>
            <person name="Aturaliya R.N."/>
            <person name="Bailey T.L."/>
            <person name="Bansal M."/>
            <person name="Baxter L."/>
            <person name="Beisel K.W."/>
            <person name="Bersano T."/>
            <person name="Bono H."/>
            <person name="Chalk A.M."/>
            <person name="Chiu K.P."/>
            <person name="Choudhary V."/>
            <person name="Christoffels A."/>
            <person name="Clutterbuck D.R."/>
            <person name="Crowe M.L."/>
            <person name="Dalla E."/>
            <person name="Dalrymple B.P."/>
            <person name="de Bono B."/>
            <person name="Della Gatta G."/>
            <person name="di Bernardo D."/>
            <person name="Down T."/>
            <person name="Engstrom P."/>
            <person name="Fagiolini M."/>
            <person name="Faulkner G."/>
            <person name="Fletcher C.F."/>
            <person name="Fukushima T."/>
            <person name="Furuno M."/>
            <person name="Futaki S."/>
            <person name="Gariboldi M."/>
            <person name="Georgii-Hemming P."/>
            <person name="Gingeras T.R."/>
            <person name="Gojobori T."/>
            <person name="Green R.E."/>
            <person name="Gustincich S."/>
            <person name="Harbers M."/>
            <person name="Hayashi Y."/>
            <person name="Hensch T.K."/>
            <person name="Hirokawa N."/>
            <person name="Hill D."/>
            <person name="Huminiecki L."/>
            <person name="Iacono M."/>
            <person name="Ikeo K."/>
            <person name="Iwama A."/>
            <person name="Ishikawa T."/>
            <person name="Jakt M."/>
            <person name="Kanapin A."/>
            <person name="Katoh M."/>
            <person name="Kawasawa Y."/>
            <person name="Kelso J."/>
            <person name="Kitamura H."/>
            <person name="Kitano H."/>
            <person name="Kollias G."/>
            <person name="Krishnan S.P."/>
            <person name="Kruger A."/>
            <person name="Kummerfeld S.K."/>
            <person name="Kurochkin I.V."/>
            <person name="Lareau L.F."/>
            <person name="Lazarevic D."/>
            <person name="Lipovich L."/>
            <person name="Liu J."/>
            <person name="Liuni S."/>
            <person name="McWilliam S."/>
            <person name="Madan Babu M."/>
            <person name="Madera M."/>
            <person name="Marchionni L."/>
            <person name="Matsuda H."/>
            <person name="Matsuzawa S."/>
            <person name="Miki H."/>
            <person name="Mignone F."/>
            <person name="Miyake S."/>
            <person name="Morris K."/>
            <person name="Mottagui-Tabar S."/>
            <person name="Mulder N."/>
            <person name="Nakano N."/>
            <person name="Nakauchi H."/>
            <person name="Ng P."/>
            <person name="Nilsson R."/>
            <person name="Nishiguchi S."/>
            <person name="Nishikawa S."/>
            <person name="Nori F."/>
            <person name="Ohara O."/>
            <person name="Okazaki Y."/>
            <person name="Orlando V."/>
            <person name="Pang K.C."/>
            <person name="Pavan W.J."/>
            <person name="Pavesi G."/>
            <person name="Pesole G."/>
            <person name="Petrovsky N."/>
            <person name="Piazza S."/>
            <person name="Reed J."/>
            <person name="Reid J.F."/>
            <person name="Ring B.Z."/>
            <person name="Ringwald M."/>
            <person name="Rost B."/>
            <person name="Ruan Y."/>
            <person name="Salzberg S.L."/>
            <person name="Sandelin A."/>
            <person name="Schneider C."/>
            <person name="Schoenbach C."/>
            <person name="Sekiguchi K."/>
            <person name="Semple C.A."/>
            <person name="Seno S."/>
            <person name="Sessa L."/>
            <person name="Sheng Y."/>
            <person name="Shibata Y."/>
            <person name="Shimada H."/>
            <person name="Shimada K."/>
            <person name="Silva D."/>
            <person name="Sinclair B."/>
            <person name="Sperling S."/>
            <person name="Stupka E."/>
            <person name="Sugiura K."/>
            <person name="Sultana R."/>
            <person name="Takenaka Y."/>
            <person name="Taki K."/>
            <person name="Tammoja K."/>
            <person name="Tan S.L."/>
            <person name="Tang S."/>
            <person name="Taylor M.S."/>
            <person name="Tegner J."/>
            <person name="Teichmann S.A."/>
            <person name="Ueda H.R."/>
            <person name="van Nimwegen E."/>
            <person name="Verardo R."/>
            <person name="Wei C.L."/>
            <person name="Yagi K."/>
            <person name="Yamanishi H."/>
            <person name="Zabarovsky E."/>
            <person name="Zhu S."/>
            <person name="Zimmer A."/>
            <person name="Hide W."/>
            <person name="Bult C."/>
            <person name="Grimmond S.M."/>
            <person name="Teasdale R.D."/>
            <person name="Liu E.T."/>
            <person name="Brusic V."/>
            <person name="Quackenbush J."/>
            <person name="Wahlestedt C."/>
            <person name="Mattick J.S."/>
            <person name="Hume D.A."/>
            <person name="Kai C."/>
            <person name="Sasaki D."/>
            <person name="Tomaru Y."/>
            <person name="Fukuda S."/>
            <person name="Kanamori-Katayama M."/>
            <person name="Suzuki M."/>
            <person name="Aoki J."/>
            <person name="Arakawa T."/>
            <person name="Iida J."/>
            <person name="Imamura K."/>
            <person name="Itoh M."/>
            <person name="Kato T."/>
            <person name="Kawaji H."/>
            <person name="Kawagashira N."/>
            <person name="Kawashima T."/>
            <person name="Kojima M."/>
            <person name="Kondo S."/>
            <person name="Konno H."/>
            <person name="Nakano K."/>
            <person name="Ninomiya N."/>
            <person name="Nishio T."/>
            <person name="Okada M."/>
            <person name="Plessy C."/>
            <person name="Shibata K."/>
            <person name="Shiraki T."/>
            <person name="Suzuki S."/>
            <person name="Tagami M."/>
            <person name="Waki K."/>
            <person name="Watahiki A."/>
            <person name="Okamura-Oho Y."/>
            <person name="Suzuki H."/>
            <person name="Kawai J."/>
            <person name="Hayashizaki Y."/>
        </authorList>
    </citation>
    <scope>NUCLEOTIDE SEQUENCE [LARGE SCALE MRNA] (ISOFORMS 1 AND 2)</scope>
    <source>
        <strain>C57BL/6J</strain>
        <tissue>Lung</tissue>
        <tissue>Placenta</tissue>
        <tissue>Thymus</tissue>
    </source>
</reference>
<reference key="3">
    <citation type="journal article" date="2009" name="PLoS Biol.">
        <title>Lineage-specific biology revealed by a finished genome assembly of the mouse.</title>
        <authorList>
            <person name="Church D.M."/>
            <person name="Goodstadt L."/>
            <person name="Hillier L.W."/>
            <person name="Zody M.C."/>
            <person name="Goldstein S."/>
            <person name="She X."/>
            <person name="Bult C.J."/>
            <person name="Agarwala R."/>
            <person name="Cherry J.L."/>
            <person name="DiCuccio M."/>
            <person name="Hlavina W."/>
            <person name="Kapustin Y."/>
            <person name="Meric P."/>
            <person name="Maglott D."/>
            <person name="Birtle Z."/>
            <person name="Marques A.C."/>
            <person name="Graves T."/>
            <person name="Zhou S."/>
            <person name="Teague B."/>
            <person name="Potamousis K."/>
            <person name="Churas C."/>
            <person name="Place M."/>
            <person name="Herschleb J."/>
            <person name="Runnheim R."/>
            <person name="Forrest D."/>
            <person name="Amos-Landgraf J."/>
            <person name="Schwartz D.C."/>
            <person name="Cheng Z."/>
            <person name="Lindblad-Toh K."/>
            <person name="Eichler E.E."/>
            <person name="Ponting C.P."/>
        </authorList>
    </citation>
    <scope>NUCLEOTIDE SEQUENCE [LARGE SCALE GENOMIC DNA]</scope>
    <source>
        <strain>C57BL/6J</strain>
    </source>
</reference>
<reference key="4">
    <citation type="journal article" date="2004" name="Genome Res.">
        <title>The status, quality, and expansion of the NIH full-length cDNA project: the Mammalian Gene Collection (MGC).</title>
        <authorList>
            <consortium name="The MGC Project Team"/>
        </authorList>
    </citation>
    <scope>NUCLEOTIDE SEQUENCE [LARGE SCALE MRNA] (ISOFORM 1)</scope>
    <source>
        <strain>Czech II</strain>
        <tissue>Mammary tumor</tissue>
    </source>
</reference>
<keyword id="KW-0025">Alternative splicing</keyword>
<keyword id="KW-0217">Developmental protein</keyword>
<keyword id="KW-0221">Differentiation</keyword>
<keyword id="KW-0325">Glycoprotein</keyword>
<keyword id="KW-0472">Membrane</keyword>
<keyword id="KW-0496">Mitochondrion</keyword>
<keyword id="KW-0539">Nucleus</keyword>
<keyword id="KW-0597">Phosphoprotein</keyword>
<keyword id="KW-1185">Reference proteome</keyword>
<keyword id="KW-0964">Secreted</keyword>
<keyword id="KW-0732">Signal</keyword>
<organism>
    <name type="scientific">Mus musculus</name>
    <name type="common">Mouse</name>
    <dbReference type="NCBI Taxonomy" id="10090"/>
    <lineage>
        <taxon>Eukaryota</taxon>
        <taxon>Metazoa</taxon>
        <taxon>Chordata</taxon>
        <taxon>Craniata</taxon>
        <taxon>Vertebrata</taxon>
        <taxon>Euteleostomi</taxon>
        <taxon>Mammalia</taxon>
        <taxon>Eutheria</taxon>
        <taxon>Euarchontoglires</taxon>
        <taxon>Glires</taxon>
        <taxon>Rodentia</taxon>
        <taxon>Myomorpha</taxon>
        <taxon>Muroidea</taxon>
        <taxon>Muridae</taxon>
        <taxon>Murinae</taxon>
        <taxon>Mus</taxon>
        <taxon>Mus</taxon>
    </lineage>
</organism>
<feature type="signal peptide" evidence="2">
    <location>
        <begin position="1"/>
        <end position="18"/>
    </location>
</feature>
<feature type="chain" id="PRO_0000294484" description="Neugrin">
    <location>
        <begin position="19"/>
        <end position="293"/>
    </location>
</feature>
<feature type="region of interest" description="Disordered" evidence="3">
    <location>
        <begin position="177"/>
        <end position="210"/>
    </location>
</feature>
<feature type="region of interest" description="Disordered" evidence="3">
    <location>
        <begin position="224"/>
        <end position="254"/>
    </location>
</feature>
<feature type="compositionally biased region" description="Basic and acidic residues" evidence="3">
    <location>
        <begin position="198"/>
        <end position="210"/>
    </location>
</feature>
<feature type="modified residue" description="Phosphoserine" evidence="1">
    <location>
        <position position="41"/>
    </location>
</feature>
<feature type="glycosylation site" description="N-linked (GlcNAc...) asparagine" evidence="2">
    <location>
        <position position="185"/>
    </location>
</feature>
<feature type="splice variant" id="VSP_039712" description="In isoform 2." evidence="5">
    <original>SALKRQKKAMRF</original>
    <variation>RYLLRGEPSAWS</variation>
    <location>
        <begin position="55"/>
        <end position="66"/>
    </location>
</feature>
<feature type="splice variant" id="VSP_039713" description="In isoform 2." evidence="5">
    <location>
        <begin position="67"/>
        <end position="293"/>
    </location>
</feature>
<feature type="sequence conflict" description="In Ref. 1; BAB21528." evidence="6" ref="1">
    <original>V</original>
    <variation>L</variation>
    <location>
        <position position="121"/>
    </location>
</feature>
<feature type="sequence conflict" description="In Ref. 1; BAB21528." evidence="6" ref="1">
    <original>H</original>
    <variation>Y</variation>
    <location>
        <position position="186"/>
    </location>
</feature>
<feature type="sequence conflict" description="In Ref. 4; AAH04034." evidence="6" ref="4">
    <original>S</original>
    <variation>A</variation>
    <location>
        <position position="241"/>
    </location>
</feature>
<feature type="sequence conflict" description="In Ref. 4; AAH04034." evidence="6" ref="4">
    <original>P</original>
    <variation>A</variation>
    <location>
        <position position="263"/>
    </location>
</feature>
<feature type="sequence conflict" description="In Ref. 4; AAH04034." evidence="6" ref="4">
    <original>P</original>
    <variation>L</variation>
    <location>
        <position position="266"/>
    </location>
</feature>
<gene>
    <name type="primary">Ngrn</name>
    <name type="synonym">Fi58g</name>
</gene>
<comment type="function">
    <text evidence="1">Plays an essential role in mitochondrial ribosome biogenesis. As a component of a functional protein-RNA module, consisting of RCC1L, NGRN, RPUSD3, RPUSD4, TRUB2, FASTKD2 and 16S mitochondrial ribosomal RNA (16S mt-rRNA), controls 16S mt-rRNA abundance and is required for intra-mitochondrial translation of core subunits of the oxidative phosphorylation system.</text>
</comment>
<comment type="subunit">
    <text evidence="1">Forms a regulatory protein-RNA complex, consisting of RCC1L, NGRN, RPUSD3, RPUSD4, TRUB2, FASTKD2 and 16S mt-rRNA. Interacts with 16S mt-rRNA; this interaction is direct.</text>
</comment>
<comment type="subcellular location">
    <subcellularLocation>
        <location evidence="1">Nucleus</location>
    </subcellularLocation>
    <subcellularLocation>
        <location evidence="1">Secreted</location>
    </subcellularLocation>
    <subcellularLocation>
        <location evidence="1">Mitochondrion membrane</location>
    </subcellularLocation>
</comment>
<comment type="alternative products">
    <event type="alternative splicing"/>
    <isoform>
        <id>Q99KS2-1</id>
        <name>1</name>
        <sequence type="displayed"/>
    </isoform>
    <isoform>
        <id>Q99KS2-2</id>
        <name>2</name>
        <sequence type="described" ref="VSP_039712 VSP_039713"/>
    </isoform>
</comment>
<comment type="tissue specificity">
    <text evidence="4">Expressed in heart, brain, liver and kidney. In brain, mainly expressed in neurons rather than glial cells.</text>
</comment>
<comment type="developmental stage">
    <text evidence="4">Level of expression increases with embryonal development.</text>
</comment>
<comment type="induction">
    <text evidence="4">Highly up-regulated in neuroblastostoma cells by RA and MG132 treatment inducing neurite outgrowth.</text>
</comment>
<comment type="miscellaneous">
    <molecule>Isoform 2</molecule>
    <text evidence="6">May be produced at very low levels due to a premature stop codon in the mRNA, leading to nonsense-mediated mRNA decay.</text>
</comment>
<comment type="similarity">
    <text evidence="6">Belongs to the neugrin family.</text>
</comment>
<comment type="sequence caution" evidence="6">
    <conflict type="erroneous initiation">
        <sequence resource="EMBL-CDS" id="AAH04034"/>
    </conflict>
    <text>Truncated N-terminus.</text>
</comment>
<comment type="sequence caution" evidence="6">
    <conflict type="frameshift">
        <sequence resource="EMBL-CDS" id="BAB21528"/>
    </conflict>
</comment>
<comment type="sequence caution" evidence="6">
    <conflict type="miscellaneous discrepancy">
        <sequence resource="EMBL-CDS" id="BAB21528"/>
    </conflict>
    <text>The N-terminus contains a duplicated region of sequence.</text>
</comment>
<comment type="sequence caution" evidence="6">
    <conflict type="erroneous translation">
        <sequence resource="EMBL-CDS" id="BAC38868"/>
    </conflict>
    <text>Wrong choice of CDS.</text>
</comment>
<comment type="sequence caution" evidence="6">
    <conflict type="erroneous initiation">
        <sequence resource="EMBL-CDS" id="BAE26050"/>
    </conflict>
    <text>Truncated N-terminus.</text>
</comment>
<comment type="sequence caution" evidence="6">
    <conflict type="erroneous translation">
        <sequence resource="EMBL-CDS" id="BAE26868"/>
    </conflict>
    <text>Wrong choice of CDS.</text>
</comment>
<sequence>MALSLSLFLGGRVRTSLARCGFASQVMAGPGSVSCEPDPDSDWEPEERELQEVESALKRQKKAMRFQKIRRQMEAPGAPPRTLTWEAMEQIRYLHKEFAESWSVPRLAEGFDVSTDVIRRVLKSKFVPTLEQKLRQDQKVLKKAGFTREIGQLPVSEDTLKALSAGRSVSGLLMAGDEVSSKSQNHSTALKVAKSHPHSTDAQKKREGRDKRIQVLEESLVPATTALGHQRELQKSATSDSEATGRAGSDTLPSAVLLEELKPGEPGDQSFSSKVVQRGHDFFDSNGNFLYRI</sequence>
<evidence type="ECO:0000250" key="1">
    <source>
        <dbReference type="UniProtKB" id="Q9NPE2"/>
    </source>
</evidence>
<evidence type="ECO:0000255" key="2"/>
<evidence type="ECO:0000256" key="3">
    <source>
        <dbReference type="SAM" id="MobiDB-lite"/>
    </source>
</evidence>
<evidence type="ECO:0000269" key="4">
    <source>
    </source>
</evidence>
<evidence type="ECO:0000303" key="5">
    <source>
    </source>
</evidence>
<evidence type="ECO:0000305" key="6"/>
<protein>
    <recommendedName>
        <fullName>Neugrin</fullName>
    </recommendedName>
    <alternativeName>
        <fullName>FI58Gm</fullName>
    </alternativeName>
    <alternativeName>
        <fullName>Neurite outgrowth-associated protein</fullName>
        <shortName>m-Neugrin</shortName>
    </alternativeName>
</protein>